<keyword id="KW-0067">ATP-binding</keyword>
<keyword id="KW-0963">Cytoplasm</keyword>
<keyword id="KW-0227">DNA damage</keyword>
<keyword id="KW-0233">DNA recombination</keyword>
<keyword id="KW-0234">DNA repair</keyword>
<keyword id="KW-0238">DNA-binding</keyword>
<keyword id="KW-0547">Nucleotide-binding</keyword>
<keyword id="KW-0742">SOS response</keyword>
<feature type="chain" id="PRO_1000193332" description="Protein RecA">
    <location>
        <begin position="1"/>
        <end position="388"/>
    </location>
</feature>
<feature type="region of interest" description="Disordered" evidence="2">
    <location>
        <begin position="347"/>
        <end position="372"/>
    </location>
</feature>
<feature type="compositionally biased region" description="Basic and acidic residues" evidence="2">
    <location>
        <begin position="357"/>
        <end position="369"/>
    </location>
</feature>
<feature type="binding site" evidence="1">
    <location>
        <begin position="79"/>
        <end position="86"/>
    </location>
    <ligand>
        <name>ATP</name>
        <dbReference type="ChEBI" id="CHEBI:30616"/>
    </ligand>
</feature>
<name>RECA_STRZJ</name>
<accession>C1CGM4</accession>
<proteinExistence type="inferred from homology"/>
<gene>
    <name evidence="1" type="primary">recA</name>
    <name type="ordered locus">SPJ_1934</name>
</gene>
<evidence type="ECO:0000255" key="1">
    <source>
        <dbReference type="HAMAP-Rule" id="MF_00268"/>
    </source>
</evidence>
<evidence type="ECO:0000256" key="2">
    <source>
        <dbReference type="SAM" id="MobiDB-lite"/>
    </source>
</evidence>
<comment type="function">
    <text evidence="1">Can catalyze the hydrolysis of ATP in the presence of single-stranded DNA, the ATP-dependent uptake of single-stranded DNA by duplex DNA, and the ATP-dependent hybridization of homologous single-stranded DNAs. It interacts with LexA causing its activation and leading to its autocatalytic cleavage.</text>
</comment>
<comment type="subcellular location">
    <subcellularLocation>
        <location evidence="1">Cytoplasm</location>
    </subcellularLocation>
</comment>
<comment type="similarity">
    <text evidence="1">Belongs to the RecA family.</text>
</comment>
<dbReference type="EMBL" id="CP000919">
    <property type="protein sequence ID" value="ACO19800.1"/>
    <property type="molecule type" value="Genomic_DNA"/>
</dbReference>
<dbReference type="RefSeq" id="WP_001085463.1">
    <property type="nucleotide sequence ID" value="NC_012466.1"/>
</dbReference>
<dbReference type="SMR" id="C1CGM4"/>
<dbReference type="KEGG" id="sjj:SPJ_1934"/>
<dbReference type="HOGENOM" id="CLU_040469_3_2_9"/>
<dbReference type="Proteomes" id="UP000002206">
    <property type="component" value="Chromosome"/>
</dbReference>
<dbReference type="GO" id="GO:0005829">
    <property type="term" value="C:cytosol"/>
    <property type="evidence" value="ECO:0007669"/>
    <property type="project" value="TreeGrafter"/>
</dbReference>
<dbReference type="GO" id="GO:0005524">
    <property type="term" value="F:ATP binding"/>
    <property type="evidence" value="ECO:0007669"/>
    <property type="project" value="UniProtKB-UniRule"/>
</dbReference>
<dbReference type="GO" id="GO:0016887">
    <property type="term" value="F:ATP hydrolysis activity"/>
    <property type="evidence" value="ECO:0007669"/>
    <property type="project" value="InterPro"/>
</dbReference>
<dbReference type="GO" id="GO:0140664">
    <property type="term" value="F:ATP-dependent DNA damage sensor activity"/>
    <property type="evidence" value="ECO:0007669"/>
    <property type="project" value="InterPro"/>
</dbReference>
<dbReference type="GO" id="GO:0003684">
    <property type="term" value="F:damaged DNA binding"/>
    <property type="evidence" value="ECO:0007669"/>
    <property type="project" value="UniProtKB-UniRule"/>
</dbReference>
<dbReference type="GO" id="GO:0003697">
    <property type="term" value="F:single-stranded DNA binding"/>
    <property type="evidence" value="ECO:0007669"/>
    <property type="project" value="UniProtKB-UniRule"/>
</dbReference>
<dbReference type="GO" id="GO:0006310">
    <property type="term" value="P:DNA recombination"/>
    <property type="evidence" value="ECO:0007669"/>
    <property type="project" value="UniProtKB-UniRule"/>
</dbReference>
<dbReference type="GO" id="GO:0006281">
    <property type="term" value="P:DNA repair"/>
    <property type="evidence" value="ECO:0007669"/>
    <property type="project" value="UniProtKB-UniRule"/>
</dbReference>
<dbReference type="GO" id="GO:0009432">
    <property type="term" value="P:SOS response"/>
    <property type="evidence" value="ECO:0007669"/>
    <property type="project" value="UniProtKB-UniRule"/>
</dbReference>
<dbReference type="CDD" id="cd00983">
    <property type="entry name" value="RecA"/>
    <property type="match status" value="1"/>
</dbReference>
<dbReference type="FunFam" id="3.40.50.300:FF:000087">
    <property type="entry name" value="Recombinase RecA"/>
    <property type="match status" value="1"/>
</dbReference>
<dbReference type="Gene3D" id="3.40.50.300">
    <property type="entry name" value="P-loop containing nucleotide triphosphate hydrolases"/>
    <property type="match status" value="1"/>
</dbReference>
<dbReference type="HAMAP" id="MF_00268">
    <property type="entry name" value="RecA"/>
    <property type="match status" value="1"/>
</dbReference>
<dbReference type="InterPro" id="IPR003593">
    <property type="entry name" value="AAA+_ATPase"/>
</dbReference>
<dbReference type="InterPro" id="IPR013765">
    <property type="entry name" value="DNA_recomb/repair_RecA"/>
</dbReference>
<dbReference type="InterPro" id="IPR020584">
    <property type="entry name" value="DNA_recomb/repair_RecA_CS"/>
</dbReference>
<dbReference type="InterPro" id="IPR027417">
    <property type="entry name" value="P-loop_NTPase"/>
</dbReference>
<dbReference type="InterPro" id="IPR049261">
    <property type="entry name" value="RecA-like_C"/>
</dbReference>
<dbReference type="InterPro" id="IPR049428">
    <property type="entry name" value="RecA-like_N"/>
</dbReference>
<dbReference type="InterPro" id="IPR020588">
    <property type="entry name" value="RecA_ATP-bd"/>
</dbReference>
<dbReference type="InterPro" id="IPR023400">
    <property type="entry name" value="RecA_C_sf"/>
</dbReference>
<dbReference type="InterPro" id="IPR020587">
    <property type="entry name" value="RecA_monomer-monomer_interface"/>
</dbReference>
<dbReference type="NCBIfam" id="TIGR02012">
    <property type="entry name" value="tigrfam_recA"/>
    <property type="match status" value="1"/>
</dbReference>
<dbReference type="PANTHER" id="PTHR45900:SF1">
    <property type="entry name" value="MITOCHONDRIAL DNA REPAIR PROTEIN RECA HOMOLOG-RELATED"/>
    <property type="match status" value="1"/>
</dbReference>
<dbReference type="PANTHER" id="PTHR45900">
    <property type="entry name" value="RECA"/>
    <property type="match status" value="1"/>
</dbReference>
<dbReference type="Pfam" id="PF00154">
    <property type="entry name" value="RecA"/>
    <property type="match status" value="1"/>
</dbReference>
<dbReference type="Pfam" id="PF21096">
    <property type="entry name" value="RecA_C"/>
    <property type="match status" value="1"/>
</dbReference>
<dbReference type="PRINTS" id="PR00142">
    <property type="entry name" value="RECA"/>
</dbReference>
<dbReference type="SMART" id="SM00382">
    <property type="entry name" value="AAA"/>
    <property type="match status" value="1"/>
</dbReference>
<dbReference type="SUPFAM" id="SSF52540">
    <property type="entry name" value="P-loop containing nucleoside triphosphate hydrolases"/>
    <property type="match status" value="1"/>
</dbReference>
<dbReference type="SUPFAM" id="SSF54752">
    <property type="entry name" value="RecA protein, C-terminal domain"/>
    <property type="match status" value="1"/>
</dbReference>
<dbReference type="PROSITE" id="PS00321">
    <property type="entry name" value="RECA_1"/>
    <property type="match status" value="1"/>
</dbReference>
<dbReference type="PROSITE" id="PS50162">
    <property type="entry name" value="RECA_2"/>
    <property type="match status" value="1"/>
</dbReference>
<dbReference type="PROSITE" id="PS50163">
    <property type="entry name" value="RECA_3"/>
    <property type="match status" value="1"/>
</dbReference>
<reference key="1">
    <citation type="journal article" date="2010" name="Genome Biol.">
        <title>Structure and dynamics of the pan-genome of Streptococcus pneumoniae and closely related species.</title>
        <authorList>
            <person name="Donati C."/>
            <person name="Hiller N.L."/>
            <person name="Tettelin H."/>
            <person name="Muzzi A."/>
            <person name="Croucher N.J."/>
            <person name="Angiuoli S.V."/>
            <person name="Oggioni M."/>
            <person name="Dunning Hotopp J.C."/>
            <person name="Hu F.Z."/>
            <person name="Riley D.R."/>
            <person name="Covacci A."/>
            <person name="Mitchell T.J."/>
            <person name="Bentley S.D."/>
            <person name="Kilian M."/>
            <person name="Ehrlich G.D."/>
            <person name="Rappuoli R."/>
            <person name="Moxon E.R."/>
            <person name="Masignani V."/>
        </authorList>
    </citation>
    <scope>NUCLEOTIDE SEQUENCE [LARGE SCALE GENOMIC DNA]</scope>
    <source>
        <strain>JJA</strain>
    </source>
</reference>
<protein>
    <recommendedName>
        <fullName evidence="1">Protein RecA</fullName>
    </recommendedName>
    <alternativeName>
        <fullName evidence="1">Recombinase A</fullName>
    </alternativeName>
</protein>
<sequence>MAKKPKKLEEISKKFGAEREKALNDALKLIEKDFGKGSIMRLGERAEQKVQVMSSGSLALDIALGSGGYPKGRIIEIYGPESSGKTTVALHAVAQAQKEGGIAAFIDAEHALDPAYAAALGVNIDELLLSQPDSGEQGLEIAGKLIDSGAVDLVVVDSVAALVPRAEIDGDIGDSHVGLQARMMSQAMRKLGASINKTKTIAIFINQLREKVGVMFGNPETTPGGRALKFYASVRLDVRGNTQIKGTGDQKETNVGKETKIKVVKNKVAPPFKEAVVEIMYGEGISKTGELLKIASDLDIIKKAGAWYSYKDEKIGQGSENAKKYLAEHPEIFDEIDKQVRSKFGLIDGEEVSEQDTENKKDEPKKEEAVNEEVTLDLGDELEIEIEE</sequence>
<organism>
    <name type="scientific">Streptococcus pneumoniae (strain JJA)</name>
    <dbReference type="NCBI Taxonomy" id="488222"/>
    <lineage>
        <taxon>Bacteria</taxon>
        <taxon>Bacillati</taxon>
        <taxon>Bacillota</taxon>
        <taxon>Bacilli</taxon>
        <taxon>Lactobacillales</taxon>
        <taxon>Streptococcaceae</taxon>
        <taxon>Streptococcus</taxon>
    </lineage>
</organism>